<reference key="1">
    <citation type="journal article" date="2002" name="Mol. Plant Microbe Interact.">
        <title>Modulation of defense responses of Malus spp. during compatible and incompatible interactions with Erwinia amylovora.</title>
        <authorList>
            <person name="Venisse J.-S."/>
            <person name="Malnoy M."/>
            <person name="Faize M."/>
            <person name="Paulin J.-P."/>
            <person name="Brisset M.-N."/>
        </authorList>
    </citation>
    <scope>NUCLEOTIDE SEQUENCE [MRNA]</scope>
    <source>
        <strain>cv. Evereste X MM106</strain>
        <tissue>Leaf</tissue>
    </source>
</reference>
<protein>
    <recommendedName>
        <fullName>Thaumatin-like protein 1b</fullName>
    </recommendedName>
    <alternativeName>
        <fullName>Pathogenesis-related protein 5b</fullName>
        <shortName>PR-5b</shortName>
    </alternativeName>
</protein>
<feature type="chain" id="PRO_0000096235" description="Thaumatin-like protein 1b">
    <location>
        <begin position="1" status="less than"/>
        <end position="212"/>
    </location>
</feature>
<feature type="disulfide bond" evidence="1">
    <location>
        <begin position="47"/>
        <end position="57"/>
    </location>
</feature>
<feature type="disulfide bond" evidence="1">
    <location>
        <begin position="62"/>
        <end position="69"/>
    </location>
</feature>
<feature type="disulfide bond" evidence="1">
    <location>
        <begin position="117"/>
        <end position="200"/>
    </location>
</feature>
<feature type="disulfide bond" evidence="1">
    <location>
        <begin position="122"/>
        <end position="183"/>
    </location>
</feature>
<feature type="disulfide bond" evidence="1">
    <location>
        <begin position="130"/>
        <end position="146"/>
    </location>
</feature>
<feature type="disulfide bond" evidence="1">
    <location>
        <begin position="150"/>
        <end position="159"/>
    </location>
</feature>
<feature type="disulfide bond" evidence="1">
    <location>
        <begin position="160"/>
        <end position="170"/>
    </location>
</feature>
<feature type="non-terminal residue" evidence="2">
    <location>
        <position position="1"/>
    </location>
</feature>
<dbReference type="EMBL" id="AF494394">
    <property type="protein sequence ID" value="AAM12887.1"/>
    <property type="molecule type" value="mRNA"/>
</dbReference>
<dbReference type="SMR" id="P83336"/>
<dbReference type="GO" id="GO:0005576">
    <property type="term" value="C:extracellular region"/>
    <property type="evidence" value="ECO:0007669"/>
    <property type="project" value="UniProtKB-SubCell"/>
</dbReference>
<dbReference type="CDD" id="cd09218">
    <property type="entry name" value="TLP-PA"/>
    <property type="match status" value="1"/>
</dbReference>
<dbReference type="FunFam" id="2.60.110.10:FF:000002">
    <property type="entry name" value="Thaumatin-like protein 1a"/>
    <property type="match status" value="1"/>
</dbReference>
<dbReference type="Gene3D" id="2.60.110.10">
    <property type="entry name" value="Thaumatin"/>
    <property type="match status" value="1"/>
</dbReference>
<dbReference type="InterPro" id="IPR037176">
    <property type="entry name" value="Osmotin/thaumatin-like_sf"/>
</dbReference>
<dbReference type="InterPro" id="IPR001938">
    <property type="entry name" value="Thaumatin"/>
</dbReference>
<dbReference type="InterPro" id="IPR017949">
    <property type="entry name" value="Thaumatin_CS"/>
</dbReference>
<dbReference type="PANTHER" id="PTHR31048">
    <property type="entry name" value="OS03G0233200 PROTEIN"/>
    <property type="match status" value="1"/>
</dbReference>
<dbReference type="Pfam" id="PF00314">
    <property type="entry name" value="Thaumatin"/>
    <property type="match status" value="1"/>
</dbReference>
<dbReference type="PIRSF" id="PIRSF002703">
    <property type="entry name" value="Thaumatin"/>
    <property type="match status" value="1"/>
</dbReference>
<dbReference type="PRINTS" id="PR00347">
    <property type="entry name" value="THAUMATIN"/>
</dbReference>
<dbReference type="SMART" id="SM00205">
    <property type="entry name" value="THN"/>
    <property type="match status" value="1"/>
</dbReference>
<dbReference type="SUPFAM" id="SSF49870">
    <property type="entry name" value="Osmotin, thaumatin-like protein"/>
    <property type="match status" value="1"/>
</dbReference>
<dbReference type="PROSITE" id="PS00316">
    <property type="entry name" value="THAUMATIN_1"/>
    <property type="match status" value="1"/>
</dbReference>
<dbReference type="PROSITE" id="PS51367">
    <property type="entry name" value="THAUMATIN_2"/>
    <property type="match status" value="1"/>
</dbReference>
<proteinExistence type="evidence at transcript level"/>
<comment type="subcellular location">
    <subcellularLocation>
        <location>Secreted</location>
    </subcellularLocation>
</comment>
<comment type="similarity">
    <text evidence="1">Belongs to the thaumatin family.</text>
</comment>
<name>TP1B_MALDO</name>
<keyword id="KW-1015">Disulfide bond</keyword>
<keyword id="KW-0964">Secreted</keyword>
<sequence length="212" mass="22100">NTVWPGTLTGDQKPQLSLTAFELASKASQSVDAPSPWSGRFWGRTRCSTDAAGKFSCETADCGSGQVACNGAGAVPPATLVEITIAANGGQDYYDVSLVDGFNLPMSVAPQGGTGECKPSSCPANVNMACPAQLQVKAADGSVISCKSACLAFGDSKYCCTPPNDTPETCPPTEYSEIFEKQCPQAYSYAYDDKNSTFTCSGGPDYVITFCP</sequence>
<accession>P83336</accession>
<organism evidence="2">
    <name type="scientific">Malus domestica</name>
    <name type="common">Apple</name>
    <name type="synonym">Pyrus malus</name>
    <dbReference type="NCBI Taxonomy" id="3750"/>
    <lineage>
        <taxon>Eukaryota</taxon>
        <taxon>Viridiplantae</taxon>
        <taxon>Streptophyta</taxon>
        <taxon>Embryophyta</taxon>
        <taxon>Tracheophyta</taxon>
        <taxon>Spermatophyta</taxon>
        <taxon>Magnoliopsida</taxon>
        <taxon>eudicotyledons</taxon>
        <taxon>Gunneridae</taxon>
        <taxon>Pentapetalae</taxon>
        <taxon>rosids</taxon>
        <taxon>fabids</taxon>
        <taxon>Rosales</taxon>
        <taxon>Rosaceae</taxon>
        <taxon>Amygdaloideae</taxon>
        <taxon>Maleae</taxon>
        <taxon>Malus</taxon>
    </lineage>
</organism>
<evidence type="ECO:0000255" key="1">
    <source>
        <dbReference type="PROSITE-ProRule" id="PRU00699"/>
    </source>
</evidence>
<evidence type="ECO:0000312" key="2">
    <source>
        <dbReference type="EMBL" id="AAM12887.1"/>
    </source>
</evidence>